<protein>
    <recommendedName>
        <fullName>H/ACA ribonucleoprotein complex subunit 2</fullName>
    </recommendedName>
    <alternativeName>
        <fullName>Nucleolar protein family A member 2</fullName>
    </alternativeName>
    <alternativeName>
        <fullName>snoRNP protein NHP2</fullName>
    </alternativeName>
</protein>
<keyword id="KW-1017">Isopeptide bond</keyword>
<keyword id="KW-0539">Nucleus</keyword>
<keyword id="KW-0597">Phosphoprotein</keyword>
<keyword id="KW-1185">Reference proteome</keyword>
<keyword id="KW-0687">Ribonucleoprotein</keyword>
<keyword id="KW-0690">Ribosome biogenesis</keyword>
<keyword id="KW-0694">RNA-binding</keyword>
<keyword id="KW-0698">rRNA processing</keyword>
<keyword id="KW-0832">Ubl conjugation</keyword>
<sequence>MTKIKADPDGPEAQAEACSGERTYQELLVNQNPIAQPLASRRLTRKLYKCIKKAVKQKQIRRGVKEVQKFVNKGEKGIMVLAGDTLPIEVYCHLPVMCEDRNLPYVYIPSKTDLGAAAGSKRPTCVIMVKPHDEYQEAYDECLEEVQSLPLPL</sequence>
<dbReference type="EMBL" id="CR858415">
    <property type="protein sequence ID" value="CAH90644.1"/>
    <property type="molecule type" value="mRNA"/>
</dbReference>
<dbReference type="RefSeq" id="NP_001125348.1">
    <property type="nucleotide sequence ID" value="NM_001131876.2"/>
</dbReference>
<dbReference type="SMR" id="Q5RC65"/>
<dbReference type="FunCoup" id="Q5RC65">
    <property type="interactions" value="1621"/>
</dbReference>
<dbReference type="STRING" id="9601.ENSPPYP00000018020"/>
<dbReference type="Ensembl" id="ENSPPYT00000061991.1">
    <property type="protein sequence ID" value="ENSPPYP00000030089.1"/>
    <property type="gene ID" value="ENSPPYG00000038546.1"/>
</dbReference>
<dbReference type="GeneID" id="100172250"/>
<dbReference type="KEGG" id="pon:100172250"/>
<dbReference type="CTD" id="55651"/>
<dbReference type="eggNOG" id="KOG3167">
    <property type="taxonomic scope" value="Eukaryota"/>
</dbReference>
<dbReference type="GeneTree" id="ENSGT00550000074939"/>
<dbReference type="HOGENOM" id="CLU_084513_1_0_1"/>
<dbReference type="InParanoid" id="Q5RC65"/>
<dbReference type="OMA" id="EDNYEAR"/>
<dbReference type="OrthoDB" id="5364946at2759"/>
<dbReference type="TreeFam" id="TF105839"/>
<dbReference type="Proteomes" id="UP000001595">
    <property type="component" value="Chromosome 5"/>
</dbReference>
<dbReference type="GO" id="GO:0031429">
    <property type="term" value="C:box H/ACA snoRNP complex"/>
    <property type="evidence" value="ECO:0007669"/>
    <property type="project" value="Ensembl"/>
</dbReference>
<dbReference type="GO" id="GO:0090661">
    <property type="term" value="C:box H/ACA telomerase RNP complex"/>
    <property type="evidence" value="ECO:0007669"/>
    <property type="project" value="Ensembl"/>
</dbReference>
<dbReference type="GO" id="GO:0015030">
    <property type="term" value="C:Cajal body"/>
    <property type="evidence" value="ECO:0007669"/>
    <property type="project" value="UniProtKB-SubCell"/>
</dbReference>
<dbReference type="GO" id="GO:0005732">
    <property type="term" value="C:sno(s)RNA-containing ribonucleoprotein complex"/>
    <property type="evidence" value="ECO:0000250"/>
    <property type="project" value="UniProtKB"/>
</dbReference>
<dbReference type="GO" id="GO:0005697">
    <property type="term" value="C:telomerase holoenzyme complex"/>
    <property type="evidence" value="ECO:0000250"/>
    <property type="project" value="UniProtKB"/>
</dbReference>
<dbReference type="GO" id="GO:0034513">
    <property type="term" value="F:box H/ACA snoRNA binding"/>
    <property type="evidence" value="ECO:0007669"/>
    <property type="project" value="Ensembl"/>
</dbReference>
<dbReference type="GO" id="GO:0070034">
    <property type="term" value="F:telomerase RNA binding"/>
    <property type="evidence" value="ECO:0007669"/>
    <property type="project" value="Ensembl"/>
</dbReference>
<dbReference type="GO" id="GO:0031118">
    <property type="term" value="P:rRNA pseudouridine synthesis"/>
    <property type="evidence" value="ECO:0000250"/>
    <property type="project" value="UniProtKB"/>
</dbReference>
<dbReference type="GO" id="GO:0007004">
    <property type="term" value="P:telomere maintenance via telomerase"/>
    <property type="evidence" value="ECO:0000250"/>
    <property type="project" value="UniProtKB"/>
</dbReference>
<dbReference type="FunFam" id="3.30.1330.30:FF:000016">
    <property type="entry name" value="H/ACA ribonucleoprotein complex subunit 2"/>
    <property type="match status" value="1"/>
</dbReference>
<dbReference type="Gene3D" id="3.30.1330.30">
    <property type="match status" value="1"/>
</dbReference>
<dbReference type="InterPro" id="IPR050257">
    <property type="entry name" value="eL8/uL1-like"/>
</dbReference>
<dbReference type="InterPro" id="IPR002415">
    <property type="entry name" value="H/ACA_rnp_Nhp2-like"/>
</dbReference>
<dbReference type="InterPro" id="IPR029064">
    <property type="entry name" value="Ribosomal_eL30-like_sf"/>
</dbReference>
<dbReference type="InterPro" id="IPR004038">
    <property type="entry name" value="Ribosomal_eL8/eL30/eS12/Gad45"/>
</dbReference>
<dbReference type="InterPro" id="IPR018492">
    <property type="entry name" value="Ribosomal_eL8/Nhp2"/>
</dbReference>
<dbReference type="PANTHER" id="PTHR23105">
    <property type="entry name" value="RIBOSOMAL PROTEIN L7AE FAMILY MEMBER"/>
    <property type="match status" value="1"/>
</dbReference>
<dbReference type="Pfam" id="PF01248">
    <property type="entry name" value="Ribosomal_L7Ae"/>
    <property type="match status" value="1"/>
</dbReference>
<dbReference type="PRINTS" id="PR00881">
    <property type="entry name" value="L7ARS6FAMILY"/>
</dbReference>
<dbReference type="PRINTS" id="PR00883">
    <property type="entry name" value="NUCLEARHMG"/>
</dbReference>
<dbReference type="SUPFAM" id="SSF55315">
    <property type="entry name" value="L30e-like"/>
    <property type="match status" value="1"/>
</dbReference>
<name>NHP2_PONAB</name>
<accession>Q5RC65</accession>
<evidence type="ECO:0000250" key="1"/>
<evidence type="ECO:0000250" key="2">
    <source>
        <dbReference type="UniProtKB" id="Q9NX24"/>
    </source>
</evidence>
<evidence type="ECO:0000305" key="3"/>
<organism>
    <name type="scientific">Pongo abelii</name>
    <name type="common">Sumatran orangutan</name>
    <name type="synonym">Pongo pygmaeus abelii</name>
    <dbReference type="NCBI Taxonomy" id="9601"/>
    <lineage>
        <taxon>Eukaryota</taxon>
        <taxon>Metazoa</taxon>
        <taxon>Chordata</taxon>
        <taxon>Craniata</taxon>
        <taxon>Vertebrata</taxon>
        <taxon>Euteleostomi</taxon>
        <taxon>Mammalia</taxon>
        <taxon>Eutheria</taxon>
        <taxon>Euarchontoglires</taxon>
        <taxon>Primates</taxon>
        <taxon>Haplorrhini</taxon>
        <taxon>Catarrhini</taxon>
        <taxon>Hominidae</taxon>
        <taxon>Pongo</taxon>
    </lineage>
</organism>
<proteinExistence type="evidence at transcript level"/>
<gene>
    <name type="primary">NHP2</name>
    <name type="synonym">NOLA2</name>
</gene>
<reference key="1">
    <citation type="submission" date="2004-11" db="EMBL/GenBank/DDBJ databases">
        <authorList>
            <consortium name="The German cDNA consortium"/>
        </authorList>
    </citation>
    <scope>NUCLEOTIDE SEQUENCE [LARGE SCALE MRNA]</scope>
    <source>
        <tissue>Heart</tissue>
    </source>
</reference>
<feature type="chain" id="PRO_0000136764" description="H/ACA ribonucleoprotein complex subunit 2">
    <location>
        <begin position="1"/>
        <end position="153"/>
    </location>
</feature>
<feature type="modified residue" description="Phosphoserine" evidence="2">
    <location>
        <position position="19"/>
    </location>
</feature>
<feature type="cross-link" description="Glycyl lysine isopeptide (Lys-Gly) (interchain with G-Cter in SUMO2)" evidence="2">
    <location>
        <position position="3"/>
    </location>
</feature>
<feature type="cross-link" description="Glycyl lysine isopeptide (Lys-Gly) (interchain with G-Cter in SUMO); alternate" evidence="1">
    <location>
        <position position="5"/>
    </location>
</feature>
<feature type="cross-link" description="Glycyl lysine isopeptide (Lys-Gly) (interchain with G-Cter in SUMO1); alternate" evidence="2">
    <location>
        <position position="5"/>
    </location>
</feature>
<feature type="cross-link" description="Glycyl lysine isopeptide (Lys-Gly) (interchain with G-Cter in SUMO2); alternate" evidence="2">
    <location>
        <position position="5"/>
    </location>
</feature>
<comment type="function">
    <text evidence="1">Required for ribosome biogenesis and telomere maintenance. Part of the H/ACA small nucleolar ribonucleoprotein (H/ACA snoRNP) complex, which catalyzes pseudouridylation of rRNA. This involves the isomerization of uridine such that the ribose is subsequently attached to C5, instead of the normal N1. Each rRNA can contain up to 100 pseudouridine ('psi') residues, which may serve to stabilize the conformation of rRNAs. May also be required for correct processing or intranuclear trafficking of TERC, the RNA component of the telomerase reverse transcriptase (TERT) holoenzyme (By similarity).</text>
</comment>
<comment type="subunit">
    <text evidence="2">Part of the H/ACA small nucleolar ribonucleoprotein (H/ACA snoRNP) complex, which contains NHP2/NOLA2, GAR1/NOLA1, NOP10/NOLA3, and DKC1/NOLA4, which is presumed to be the catalytic subunit. The complex contains a stable core formed by binding of one or two NOP10-DKC1 heterodimers to NHP2; GAR1 subsequently binds to this core via DKC1. The complex binds a box H/ACA small nucleolar RNA (snoRNA), which may target the specific site of modification within the RNA substrate. During assembly, the complex contains NAF1 instead of GAR1/NOLA1. The complex also interacts with TERC, which contains a 3'-terminal domain related to the box H/ACA snoRNAs. Specific interactions with snoRNAs or TERC are mediated by GAR1 and NHP2. Associates with NOLC1/NOPP140. H/ACA snoRNPs interact with the SMN complex, consisting of SMN1 or SMN2, GEMIN2/SIP1, DDX20/GEMIN3, and GEMIN4. This is mediated by interaction between GAR1 and SMN1 or SMN2. The SMN complex may be required for correct assembly of the H/ACA snoRNP complex. Component of the telomerase holoenzyme complex composed of one molecule of TERT, one molecule of WRAP53/TCAB1, two molecules of H/ACA ribonucleoprotein complex subunits DKC1, NOP10, NHP2 and GAR1, and a telomerase RNA template component (TERC). The telomerase holoenzyme complex is associated with TEP1, SMG6/EST1A and POT1.</text>
</comment>
<comment type="subcellular location">
    <subcellularLocation>
        <location evidence="1">Nucleus</location>
        <location evidence="1">Nucleolus</location>
    </subcellularLocation>
    <subcellularLocation>
        <location evidence="1">Nucleus</location>
        <location evidence="1">Cajal body</location>
    </subcellularLocation>
    <text evidence="1">Also localized to Cajal bodies (coiled bodies).</text>
</comment>
<comment type="similarity">
    <text evidence="3">Belongs to the eukaryotic ribosomal protein eL8 family.</text>
</comment>